<organism>
    <name type="scientific">Burkholderia mallei (strain ATCC 23344)</name>
    <dbReference type="NCBI Taxonomy" id="243160"/>
    <lineage>
        <taxon>Bacteria</taxon>
        <taxon>Pseudomonadati</taxon>
        <taxon>Pseudomonadota</taxon>
        <taxon>Betaproteobacteria</taxon>
        <taxon>Burkholderiales</taxon>
        <taxon>Burkholderiaceae</taxon>
        <taxon>Burkholderia</taxon>
        <taxon>pseudomallei group</taxon>
    </lineage>
</organism>
<comment type="function">
    <text evidence="1">This protein is involved in the repair of mismatches in DNA. It is possible that it carries out the mismatch recognition step. This protein has a weak ATPase activity.</text>
</comment>
<comment type="similarity">
    <text evidence="1">Belongs to the DNA mismatch repair MutS family.</text>
</comment>
<accession>Q62J26</accession>
<protein>
    <recommendedName>
        <fullName evidence="1">DNA mismatch repair protein MutS</fullName>
    </recommendedName>
</protein>
<feature type="chain" id="PRO_0000224355" description="DNA mismatch repair protein MutS">
    <location>
        <begin position="1"/>
        <end position="891"/>
    </location>
</feature>
<feature type="binding site" evidence="1">
    <location>
        <begin position="634"/>
        <end position="641"/>
    </location>
    <ligand>
        <name>ATP</name>
        <dbReference type="ChEBI" id="CHEBI:30616"/>
    </ligand>
</feature>
<evidence type="ECO:0000255" key="1">
    <source>
        <dbReference type="HAMAP-Rule" id="MF_00096"/>
    </source>
</evidence>
<keyword id="KW-0067">ATP-binding</keyword>
<keyword id="KW-0227">DNA damage</keyword>
<keyword id="KW-0234">DNA repair</keyword>
<keyword id="KW-0238">DNA-binding</keyword>
<keyword id="KW-0547">Nucleotide-binding</keyword>
<keyword id="KW-1185">Reference proteome</keyword>
<name>MUTS_BURMA</name>
<sequence>MATQIDASSEAAAATAAAQHTPMMQQYLRIKSEHPDTLVFYRMGDFYELFFEDAEKAARLLDLTLTQRGASAGTPIKMAGVPHHAVEQYLAKLVKFGESAAICEQIGDPATSKGPVERKVVRVVTPGTLTDAALLSDKSDVFLLALCVGHNKRGVASNIGLAWLNLASGALRLAELAPDQLGAALERIRPAEILAADGTIESVPAGMGAITRVPAWHFDIASGTQRLCDQLEVASLDGFGAQALTSANGAAGALLIYAAATQGQQLRHVRSLKVENESEYIGLDPSTRRNLELTETLRGTESPTLYSLLDTCCTAMGSRLLRHWLHHPPRASVAAQARHQAIGALLDAPPNAGLDSLRSALRQIADVERITGRLALLSARPRDLSSLRDTFAALPALRERVAEIASNAAALGRLEAALEPPPGCLDLLTRAIAAEPAAMVRDGGVIARGYDAELDELRDISENCGQFLIDLETRERARTGISNLRVEYNKVHGFYIEVTRGQTDKVPDDYRRRQTLKNAERYITPELKTFEDKALSAQERALARERALYDGVLQALLPHIEGCQRVASGLAELDLLAAFAERARTLDWVAPEFTDEIGIEIDQGRHPVVEAQVEQFIANDCALNPERKLLLITGPNMGGKSTFMRQTALIALMAYVGSYVPAKAARFGPIDRIFTRIGAADDLAGGRSTFMVEMTEAAAILNDATPHSLVLMDEIGRGTSTFDGLALAWAIARHLLSHNRCYTLFATHYFELTQLPAEFPQAANVHLSAVEHGHGIVFLHAVEEGPANQSYGLQVAQLAGVPAPVIRAARKHLAHLEQQSAAQATPQLDLFAAPPVVDEPECNEPPAAATPHPALERLLELDPDDLKPRDALDLLYELHTLARSGPADAQR</sequence>
<proteinExistence type="inferred from homology"/>
<reference key="1">
    <citation type="journal article" date="2004" name="Proc. Natl. Acad. Sci. U.S.A.">
        <title>Structural flexibility in the Burkholderia mallei genome.</title>
        <authorList>
            <person name="Nierman W.C."/>
            <person name="DeShazer D."/>
            <person name="Kim H.S."/>
            <person name="Tettelin H."/>
            <person name="Nelson K.E."/>
            <person name="Feldblyum T.V."/>
            <person name="Ulrich R.L."/>
            <person name="Ronning C.M."/>
            <person name="Brinkac L.M."/>
            <person name="Daugherty S.C."/>
            <person name="Davidsen T.D."/>
            <person name="DeBoy R.T."/>
            <person name="Dimitrov G."/>
            <person name="Dodson R.J."/>
            <person name="Durkin A.S."/>
            <person name="Gwinn M.L."/>
            <person name="Haft D.H."/>
            <person name="Khouri H.M."/>
            <person name="Kolonay J.F."/>
            <person name="Madupu R."/>
            <person name="Mohammoud Y."/>
            <person name="Nelson W.C."/>
            <person name="Radune D."/>
            <person name="Romero C.M."/>
            <person name="Sarria S."/>
            <person name="Selengut J."/>
            <person name="Shamblin C."/>
            <person name="Sullivan S.A."/>
            <person name="White O."/>
            <person name="Yu Y."/>
            <person name="Zafar N."/>
            <person name="Zhou L."/>
            <person name="Fraser C.M."/>
        </authorList>
    </citation>
    <scope>NUCLEOTIDE SEQUENCE [LARGE SCALE GENOMIC DNA]</scope>
    <source>
        <strain>ATCC 23344</strain>
    </source>
</reference>
<gene>
    <name evidence="1" type="primary">mutS</name>
    <name type="ordered locus">BMA1671</name>
</gene>
<dbReference type="EMBL" id="CP000010">
    <property type="protein sequence ID" value="AAU47784.1"/>
    <property type="molecule type" value="Genomic_DNA"/>
</dbReference>
<dbReference type="RefSeq" id="YP_103293.1">
    <property type="nucleotide sequence ID" value="NC_006348.1"/>
</dbReference>
<dbReference type="SMR" id="Q62J26"/>
<dbReference type="KEGG" id="bma:BMA1671"/>
<dbReference type="PATRIC" id="fig|243160.12.peg.1707"/>
<dbReference type="eggNOG" id="COG0249">
    <property type="taxonomic scope" value="Bacteria"/>
</dbReference>
<dbReference type="HOGENOM" id="CLU_002472_4_0_4"/>
<dbReference type="Proteomes" id="UP000006693">
    <property type="component" value="Chromosome 1"/>
</dbReference>
<dbReference type="GO" id="GO:0005829">
    <property type="term" value="C:cytosol"/>
    <property type="evidence" value="ECO:0007669"/>
    <property type="project" value="TreeGrafter"/>
</dbReference>
<dbReference type="GO" id="GO:0005524">
    <property type="term" value="F:ATP binding"/>
    <property type="evidence" value="ECO:0007669"/>
    <property type="project" value="UniProtKB-UniRule"/>
</dbReference>
<dbReference type="GO" id="GO:0140664">
    <property type="term" value="F:ATP-dependent DNA damage sensor activity"/>
    <property type="evidence" value="ECO:0007669"/>
    <property type="project" value="InterPro"/>
</dbReference>
<dbReference type="GO" id="GO:0003684">
    <property type="term" value="F:damaged DNA binding"/>
    <property type="evidence" value="ECO:0007669"/>
    <property type="project" value="UniProtKB-UniRule"/>
</dbReference>
<dbReference type="GO" id="GO:0030983">
    <property type="term" value="F:mismatched DNA binding"/>
    <property type="evidence" value="ECO:0007669"/>
    <property type="project" value="InterPro"/>
</dbReference>
<dbReference type="GO" id="GO:0006298">
    <property type="term" value="P:mismatch repair"/>
    <property type="evidence" value="ECO:0007669"/>
    <property type="project" value="UniProtKB-UniRule"/>
</dbReference>
<dbReference type="CDD" id="cd03284">
    <property type="entry name" value="ABC_MutS1"/>
    <property type="match status" value="1"/>
</dbReference>
<dbReference type="FunFam" id="3.40.1170.10:FF:000001">
    <property type="entry name" value="DNA mismatch repair protein MutS"/>
    <property type="match status" value="1"/>
</dbReference>
<dbReference type="FunFam" id="3.40.50.300:FF:000870">
    <property type="entry name" value="MutS protein homolog 4"/>
    <property type="match status" value="1"/>
</dbReference>
<dbReference type="Gene3D" id="1.10.1420.10">
    <property type="match status" value="2"/>
</dbReference>
<dbReference type="Gene3D" id="6.10.140.430">
    <property type="match status" value="1"/>
</dbReference>
<dbReference type="Gene3D" id="3.40.1170.10">
    <property type="entry name" value="DNA repair protein MutS, domain I"/>
    <property type="match status" value="1"/>
</dbReference>
<dbReference type="Gene3D" id="3.30.420.110">
    <property type="entry name" value="MutS, connector domain"/>
    <property type="match status" value="1"/>
</dbReference>
<dbReference type="Gene3D" id="3.40.50.300">
    <property type="entry name" value="P-loop containing nucleotide triphosphate hydrolases"/>
    <property type="match status" value="1"/>
</dbReference>
<dbReference type="HAMAP" id="MF_00096">
    <property type="entry name" value="MutS"/>
    <property type="match status" value="1"/>
</dbReference>
<dbReference type="InterPro" id="IPR005748">
    <property type="entry name" value="DNA_mismatch_repair_MutS"/>
</dbReference>
<dbReference type="InterPro" id="IPR007695">
    <property type="entry name" value="DNA_mismatch_repair_MutS-lik_N"/>
</dbReference>
<dbReference type="InterPro" id="IPR017261">
    <property type="entry name" value="DNA_mismatch_repair_MutS/MSH"/>
</dbReference>
<dbReference type="InterPro" id="IPR000432">
    <property type="entry name" value="DNA_mismatch_repair_MutS_C"/>
</dbReference>
<dbReference type="InterPro" id="IPR007861">
    <property type="entry name" value="DNA_mismatch_repair_MutS_clamp"/>
</dbReference>
<dbReference type="InterPro" id="IPR007696">
    <property type="entry name" value="DNA_mismatch_repair_MutS_core"/>
</dbReference>
<dbReference type="InterPro" id="IPR016151">
    <property type="entry name" value="DNA_mismatch_repair_MutS_N"/>
</dbReference>
<dbReference type="InterPro" id="IPR036187">
    <property type="entry name" value="DNA_mismatch_repair_MutS_sf"/>
</dbReference>
<dbReference type="InterPro" id="IPR007860">
    <property type="entry name" value="DNA_mmatch_repair_MutS_con_dom"/>
</dbReference>
<dbReference type="InterPro" id="IPR045076">
    <property type="entry name" value="MutS"/>
</dbReference>
<dbReference type="InterPro" id="IPR036678">
    <property type="entry name" value="MutS_con_dom_sf"/>
</dbReference>
<dbReference type="InterPro" id="IPR027417">
    <property type="entry name" value="P-loop_NTPase"/>
</dbReference>
<dbReference type="NCBIfam" id="TIGR01070">
    <property type="entry name" value="mutS1"/>
    <property type="match status" value="1"/>
</dbReference>
<dbReference type="NCBIfam" id="NF003810">
    <property type="entry name" value="PRK05399.1"/>
    <property type="match status" value="1"/>
</dbReference>
<dbReference type="PANTHER" id="PTHR11361:SF34">
    <property type="entry name" value="DNA MISMATCH REPAIR PROTEIN MSH1, MITOCHONDRIAL"/>
    <property type="match status" value="1"/>
</dbReference>
<dbReference type="PANTHER" id="PTHR11361">
    <property type="entry name" value="DNA MISMATCH REPAIR PROTEIN MUTS FAMILY MEMBER"/>
    <property type="match status" value="1"/>
</dbReference>
<dbReference type="Pfam" id="PF01624">
    <property type="entry name" value="MutS_I"/>
    <property type="match status" value="1"/>
</dbReference>
<dbReference type="Pfam" id="PF05188">
    <property type="entry name" value="MutS_II"/>
    <property type="match status" value="1"/>
</dbReference>
<dbReference type="Pfam" id="PF05192">
    <property type="entry name" value="MutS_III"/>
    <property type="match status" value="1"/>
</dbReference>
<dbReference type="Pfam" id="PF05190">
    <property type="entry name" value="MutS_IV"/>
    <property type="match status" value="1"/>
</dbReference>
<dbReference type="Pfam" id="PF00488">
    <property type="entry name" value="MutS_V"/>
    <property type="match status" value="1"/>
</dbReference>
<dbReference type="PIRSF" id="PIRSF037677">
    <property type="entry name" value="DNA_mis_repair_Msh6"/>
    <property type="match status" value="1"/>
</dbReference>
<dbReference type="SMART" id="SM00534">
    <property type="entry name" value="MUTSac"/>
    <property type="match status" value="1"/>
</dbReference>
<dbReference type="SMART" id="SM00533">
    <property type="entry name" value="MUTSd"/>
    <property type="match status" value="1"/>
</dbReference>
<dbReference type="SUPFAM" id="SSF55271">
    <property type="entry name" value="DNA repair protein MutS, domain I"/>
    <property type="match status" value="1"/>
</dbReference>
<dbReference type="SUPFAM" id="SSF53150">
    <property type="entry name" value="DNA repair protein MutS, domain II"/>
    <property type="match status" value="1"/>
</dbReference>
<dbReference type="SUPFAM" id="SSF48334">
    <property type="entry name" value="DNA repair protein MutS, domain III"/>
    <property type="match status" value="1"/>
</dbReference>
<dbReference type="SUPFAM" id="SSF52540">
    <property type="entry name" value="P-loop containing nucleoside triphosphate hydrolases"/>
    <property type="match status" value="1"/>
</dbReference>
<dbReference type="PROSITE" id="PS00486">
    <property type="entry name" value="DNA_MISMATCH_REPAIR_2"/>
    <property type="match status" value="1"/>
</dbReference>